<comment type="function">
    <text evidence="1">Acts as a chaperone.</text>
</comment>
<comment type="induction">
    <text evidence="1">By stress conditions e.g. heat shock.</text>
</comment>
<comment type="similarity">
    <text evidence="1">Belongs to the heat shock protein 70 family.</text>
</comment>
<protein>
    <recommendedName>
        <fullName evidence="1">Chaperone protein DnaK</fullName>
    </recommendedName>
    <alternativeName>
        <fullName evidence="1">HSP70</fullName>
    </alternativeName>
    <alternativeName>
        <fullName evidence="1">Heat shock 70 kDa protein</fullName>
    </alternativeName>
    <alternativeName>
        <fullName evidence="1">Heat shock protein 70</fullName>
    </alternativeName>
</protein>
<feature type="chain" id="PRO_1000119741" description="Chaperone protein DnaK">
    <location>
        <begin position="1"/>
        <end position="641"/>
    </location>
</feature>
<feature type="region of interest" description="Disordered" evidence="2">
    <location>
        <begin position="604"/>
        <end position="641"/>
    </location>
</feature>
<feature type="compositionally biased region" description="Low complexity" evidence="2">
    <location>
        <begin position="604"/>
        <end position="619"/>
    </location>
</feature>
<feature type="modified residue" description="Phosphothreonine; by autocatalysis" evidence="1">
    <location>
        <position position="199"/>
    </location>
</feature>
<organism>
    <name type="scientific">Proteus mirabilis (strain HI4320)</name>
    <dbReference type="NCBI Taxonomy" id="529507"/>
    <lineage>
        <taxon>Bacteria</taxon>
        <taxon>Pseudomonadati</taxon>
        <taxon>Pseudomonadota</taxon>
        <taxon>Gammaproteobacteria</taxon>
        <taxon>Enterobacterales</taxon>
        <taxon>Morganellaceae</taxon>
        <taxon>Proteus</taxon>
    </lineage>
</organism>
<proteinExistence type="inferred from homology"/>
<reference key="1">
    <citation type="journal article" date="2008" name="J. Bacteriol.">
        <title>Complete genome sequence of uropathogenic Proteus mirabilis, a master of both adherence and motility.</title>
        <authorList>
            <person name="Pearson M.M."/>
            <person name="Sebaihia M."/>
            <person name="Churcher C."/>
            <person name="Quail M.A."/>
            <person name="Seshasayee A.S."/>
            <person name="Luscombe N.M."/>
            <person name="Abdellah Z."/>
            <person name="Arrosmith C."/>
            <person name="Atkin B."/>
            <person name="Chillingworth T."/>
            <person name="Hauser H."/>
            <person name="Jagels K."/>
            <person name="Moule S."/>
            <person name="Mungall K."/>
            <person name="Norbertczak H."/>
            <person name="Rabbinowitsch E."/>
            <person name="Walker D."/>
            <person name="Whithead S."/>
            <person name="Thomson N.R."/>
            <person name="Rather P.N."/>
            <person name="Parkhill J."/>
            <person name="Mobley H.L.T."/>
        </authorList>
    </citation>
    <scope>NUCLEOTIDE SEQUENCE [LARGE SCALE GENOMIC DNA]</scope>
    <source>
        <strain>HI4320</strain>
    </source>
</reference>
<dbReference type="EMBL" id="AM942759">
    <property type="protein sequence ID" value="CAR40249.1"/>
    <property type="molecule type" value="Genomic_DNA"/>
</dbReference>
<dbReference type="RefSeq" id="WP_012367437.1">
    <property type="nucleotide sequence ID" value="NC_010554.1"/>
</dbReference>
<dbReference type="SMR" id="B4F2V5"/>
<dbReference type="EnsemblBacteria" id="CAR40249">
    <property type="protein sequence ID" value="CAR40249"/>
    <property type="gene ID" value="PMI0009"/>
</dbReference>
<dbReference type="GeneID" id="6803160"/>
<dbReference type="KEGG" id="pmr:PMI0009"/>
<dbReference type="PATRIC" id="fig|529507.6.peg.9"/>
<dbReference type="eggNOG" id="COG0443">
    <property type="taxonomic scope" value="Bacteria"/>
</dbReference>
<dbReference type="HOGENOM" id="CLU_005965_2_1_6"/>
<dbReference type="Proteomes" id="UP000008319">
    <property type="component" value="Chromosome"/>
</dbReference>
<dbReference type="GO" id="GO:0005524">
    <property type="term" value="F:ATP binding"/>
    <property type="evidence" value="ECO:0007669"/>
    <property type="project" value="UniProtKB-UniRule"/>
</dbReference>
<dbReference type="GO" id="GO:0140662">
    <property type="term" value="F:ATP-dependent protein folding chaperone"/>
    <property type="evidence" value="ECO:0007669"/>
    <property type="project" value="InterPro"/>
</dbReference>
<dbReference type="GO" id="GO:0051082">
    <property type="term" value="F:unfolded protein binding"/>
    <property type="evidence" value="ECO:0007669"/>
    <property type="project" value="InterPro"/>
</dbReference>
<dbReference type="CDD" id="cd10234">
    <property type="entry name" value="ASKHA_NBD_HSP70_DnaK-like"/>
    <property type="match status" value="1"/>
</dbReference>
<dbReference type="FunFam" id="2.60.34.10:FF:000014">
    <property type="entry name" value="Chaperone protein DnaK HSP70"/>
    <property type="match status" value="1"/>
</dbReference>
<dbReference type="FunFam" id="3.30.30.30:FF:000003">
    <property type="entry name" value="Heat shock protein 9"/>
    <property type="match status" value="1"/>
</dbReference>
<dbReference type="FunFam" id="1.20.1270.10:FF:000001">
    <property type="entry name" value="Molecular chaperone DnaK"/>
    <property type="match status" value="1"/>
</dbReference>
<dbReference type="FunFam" id="3.30.420.40:FF:000004">
    <property type="entry name" value="Molecular chaperone DnaK"/>
    <property type="match status" value="1"/>
</dbReference>
<dbReference type="FunFam" id="3.90.640.10:FF:000003">
    <property type="entry name" value="Molecular chaperone DnaK"/>
    <property type="match status" value="1"/>
</dbReference>
<dbReference type="Gene3D" id="1.20.1270.10">
    <property type="match status" value="1"/>
</dbReference>
<dbReference type="Gene3D" id="3.30.420.40">
    <property type="match status" value="2"/>
</dbReference>
<dbReference type="Gene3D" id="3.90.640.10">
    <property type="entry name" value="Actin, Chain A, domain 4"/>
    <property type="match status" value="1"/>
</dbReference>
<dbReference type="Gene3D" id="2.60.34.10">
    <property type="entry name" value="Substrate Binding Domain Of DNAk, Chain A, domain 1"/>
    <property type="match status" value="1"/>
</dbReference>
<dbReference type="HAMAP" id="MF_00332">
    <property type="entry name" value="DnaK"/>
    <property type="match status" value="1"/>
</dbReference>
<dbReference type="InterPro" id="IPR043129">
    <property type="entry name" value="ATPase_NBD"/>
</dbReference>
<dbReference type="InterPro" id="IPR012725">
    <property type="entry name" value="Chaperone_DnaK"/>
</dbReference>
<dbReference type="InterPro" id="IPR018181">
    <property type="entry name" value="Heat_shock_70_CS"/>
</dbReference>
<dbReference type="InterPro" id="IPR029048">
    <property type="entry name" value="HSP70_C_sf"/>
</dbReference>
<dbReference type="InterPro" id="IPR029047">
    <property type="entry name" value="HSP70_peptide-bd_sf"/>
</dbReference>
<dbReference type="InterPro" id="IPR013126">
    <property type="entry name" value="Hsp_70_fam"/>
</dbReference>
<dbReference type="NCBIfam" id="NF001413">
    <property type="entry name" value="PRK00290.1"/>
    <property type="match status" value="1"/>
</dbReference>
<dbReference type="NCBIfam" id="NF003520">
    <property type="entry name" value="PRK05183.1"/>
    <property type="match status" value="1"/>
</dbReference>
<dbReference type="NCBIfam" id="TIGR02350">
    <property type="entry name" value="prok_dnaK"/>
    <property type="match status" value="1"/>
</dbReference>
<dbReference type="PANTHER" id="PTHR19375">
    <property type="entry name" value="HEAT SHOCK PROTEIN 70KDA"/>
    <property type="match status" value="1"/>
</dbReference>
<dbReference type="Pfam" id="PF00012">
    <property type="entry name" value="HSP70"/>
    <property type="match status" value="1"/>
</dbReference>
<dbReference type="PRINTS" id="PR00301">
    <property type="entry name" value="HEATSHOCK70"/>
</dbReference>
<dbReference type="SUPFAM" id="SSF53067">
    <property type="entry name" value="Actin-like ATPase domain"/>
    <property type="match status" value="2"/>
</dbReference>
<dbReference type="SUPFAM" id="SSF100934">
    <property type="entry name" value="Heat shock protein 70kD (HSP70), C-terminal subdomain"/>
    <property type="match status" value="1"/>
</dbReference>
<dbReference type="SUPFAM" id="SSF100920">
    <property type="entry name" value="Heat shock protein 70kD (HSP70), peptide-binding domain"/>
    <property type="match status" value="1"/>
</dbReference>
<dbReference type="PROSITE" id="PS00297">
    <property type="entry name" value="HSP70_1"/>
    <property type="match status" value="1"/>
</dbReference>
<dbReference type="PROSITE" id="PS00329">
    <property type="entry name" value="HSP70_2"/>
    <property type="match status" value="1"/>
</dbReference>
<dbReference type="PROSITE" id="PS01036">
    <property type="entry name" value="HSP70_3"/>
    <property type="match status" value="1"/>
</dbReference>
<name>DNAK_PROMH</name>
<sequence length="641" mass="69283">MGKIIGIDLGTTNSCVAVMDGKNARVIENGEGDRTTPSIVAYAQDGEILVGQPAKRQAVTNSQNTLFAIKRLIGRRFEDAEVQRDVSIMPYKIIKADNGDAWVEARNEKMAPPQVSAEVLKKMKKTAEDYLGEPVTEAVITVPAYFNDAQRQATKDAGRIAGLDVKRIINEPTAAALAYGLDREVGNRTIAVYDLGGGTFDISIIEIDEVDGEKTYEVLSTNGDTHLGGEDFDSRLINYLVDEFKKEQGIDLRNDPLAMQRLKEAAEKAKIELSSAQQTDVNLPYVTADATGPKHLNIKVTRAKLESLVEDLVKRSMDPVKVALEDAGLKVSEVNDVILVGGQTRMPMVQKTVAEFFGKEPRKDVNPDEAVAMGAAVQGGVLAGDVKDVLLLDVTPLSLGIETMGGVMTSLIAKNTTIPTKHSQVFSTAEDNQSAVTIHVLQGERKRASDNKSLGQFNLDGIQPAPRGMPQIEVTFDIDADGILHVSAKDKNSGREQNITIKASSGLNEEEIQKMVRDAEANAEADRKFEELVQTRNQADQLVHGTRKQIEEAGDKLAANDKEAIEKALSELEIASKGEDKAAIEAKLQALVEASKPLLEIAQQQAQAGAGNTADATDAGAKKDDDVVDAEFEEVDGKDKK</sequence>
<keyword id="KW-0067">ATP-binding</keyword>
<keyword id="KW-0143">Chaperone</keyword>
<keyword id="KW-0547">Nucleotide-binding</keyword>
<keyword id="KW-0597">Phosphoprotein</keyword>
<keyword id="KW-1185">Reference proteome</keyword>
<keyword id="KW-0346">Stress response</keyword>
<accession>B4F2V5</accession>
<evidence type="ECO:0000255" key="1">
    <source>
        <dbReference type="HAMAP-Rule" id="MF_00332"/>
    </source>
</evidence>
<evidence type="ECO:0000256" key="2">
    <source>
        <dbReference type="SAM" id="MobiDB-lite"/>
    </source>
</evidence>
<gene>
    <name evidence="1" type="primary">dnaK</name>
    <name type="ordered locus">PMI0009</name>
</gene>